<proteinExistence type="evidence at transcript level"/>
<name>AAR3_ARATH</name>
<sequence length="295" mass="34372">MDSSPVSARFDIFEIYRRFCAIRSGQQLCNKKPCDGEESQRFNLSKEAITQLLYLVENKFQARNSIFDELFKLMSRLDLMVDFTEFTCFYDFVFFMCRENGQKNITISRAITAWKLVLAGRFRLLNRWCDFIEKNQRHNISEDTWQQVLAFSRCVHENLEGYDSEGAWPVLIDDFVEHMYSILGPNKDTSLFCKCGDTESESCLYQEDEHHKDYRRPHTGLRNIPGLKRKTSKKNDEEEEDEDEEVLETQNSSSLLNFKRIKTSNSPRCSSKSPCSIERSLSQGFASLLSTGDKP</sequence>
<keyword id="KW-0927">Auxin signaling pathway</keyword>
<keyword id="KW-0539">Nucleus</keyword>
<keyword id="KW-1185">Reference proteome</keyword>
<keyword id="KW-0833">Ubl conjugation pathway</keyword>
<protein>
    <recommendedName>
        <fullName evidence="7">Defective in cullin neddylation protein AAR3</fullName>
    </recommendedName>
    <alternativeName>
        <fullName evidence="6">Protein ANTIAUXIN-RESISTANT 3</fullName>
    </alternativeName>
</protein>
<feature type="chain" id="PRO_0000452736" description="Defective in cullin neddylation protein AAR3">
    <location>
        <begin position="1"/>
        <end position="295"/>
    </location>
</feature>
<feature type="domain" description="DCUN1" evidence="2">
    <location>
        <begin position="1"/>
        <end position="180"/>
    </location>
</feature>
<feature type="region of interest" description="Disordered" evidence="4">
    <location>
        <begin position="214"/>
        <end position="251"/>
    </location>
</feature>
<feature type="short sequence motif" description="Nuclear localization signal" evidence="3">
    <location>
        <begin position="214"/>
        <end position="221"/>
    </location>
</feature>
<feature type="compositionally biased region" description="Acidic residues" evidence="4">
    <location>
        <begin position="237"/>
        <end position="247"/>
    </location>
</feature>
<dbReference type="EMBL" id="AB025615">
    <property type="protein sequence ID" value="BAA95750.1"/>
    <property type="molecule type" value="Genomic_DNA"/>
</dbReference>
<dbReference type="EMBL" id="CP002686">
    <property type="protein sequence ID" value="AEE77516.1"/>
    <property type="molecule type" value="Genomic_DNA"/>
</dbReference>
<dbReference type="EMBL" id="AK118926">
    <property type="protein sequence ID" value="BAC43507.1"/>
    <property type="molecule type" value="mRNA"/>
</dbReference>
<dbReference type="EMBL" id="BT005690">
    <property type="protein sequence ID" value="AAO64110.1"/>
    <property type="molecule type" value="mRNA"/>
</dbReference>
<dbReference type="RefSeq" id="NP_189539.1">
    <property type="nucleotide sequence ID" value="NM_113818.4"/>
</dbReference>
<dbReference type="SMR" id="Q9MBG8"/>
<dbReference type="FunCoup" id="Q9MBG8">
    <property type="interactions" value="1901"/>
</dbReference>
<dbReference type="STRING" id="3702.Q9MBG8"/>
<dbReference type="PaxDb" id="3702-AT3G28970.1"/>
<dbReference type="ProteomicsDB" id="187124"/>
<dbReference type="EnsemblPlants" id="AT3G28970.1">
    <property type="protein sequence ID" value="AT3G28970.1"/>
    <property type="gene ID" value="AT3G28970"/>
</dbReference>
<dbReference type="GeneID" id="822537"/>
<dbReference type="Gramene" id="AT3G28970.1">
    <property type="protein sequence ID" value="AT3G28970.1"/>
    <property type="gene ID" value="AT3G28970"/>
</dbReference>
<dbReference type="KEGG" id="ath:AT3G28970"/>
<dbReference type="Araport" id="AT3G28970"/>
<dbReference type="TAIR" id="AT3G28970">
    <property type="gene designation" value="AAR3"/>
</dbReference>
<dbReference type="eggNOG" id="KOG3077">
    <property type="taxonomic scope" value="Eukaryota"/>
</dbReference>
<dbReference type="HOGENOM" id="CLU_071720_0_0_1"/>
<dbReference type="InParanoid" id="Q9MBG8"/>
<dbReference type="PhylomeDB" id="Q9MBG8"/>
<dbReference type="PRO" id="PR:Q9MBG8"/>
<dbReference type="Proteomes" id="UP000006548">
    <property type="component" value="Chromosome 3"/>
</dbReference>
<dbReference type="ExpressionAtlas" id="Q9MBG8">
    <property type="expression patterns" value="baseline and differential"/>
</dbReference>
<dbReference type="GO" id="GO:0005634">
    <property type="term" value="C:nucleus"/>
    <property type="evidence" value="ECO:0000250"/>
    <property type="project" value="TAIR"/>
</dbReference>
<dbReference type="GO" id="GO:0009734">
    <property type="term" value="P:auxin-activated signaling pathway"/>
    <property type="evidence" value="ECO:0000315"/>
    <property type="project" value="TAIR"/>
</dbReference>
<dbReference type="FunFam" id="1.10.238.200:FF:000006">
    <property type="entry name" value="Defective in cullin neddylation protein"/>
    <property type="match status" value="1"/>
</dbReference>
<dbReference type="Gene3D" id="1.10.238.200">
    <property type="entry name" value="Cullin, PONY binding domain"/>
    <property type="match status" value="1"/>
</dbReference>
<dbReference type="InterPro" id="IPR014764">
    <property type="entry name" value="DCN-prot"/>
</dbReference>
<dbReference type="InterPro" id="IPR042460">
    <property type="entry name" value="DCN1-like_PONY"/>
</dbReference>
<dbReference type="InterPro" id="IPR005176">
    <property type="entry name" value="PONY_dom"/>
</dbReference>
<dbReference type="PANTHER" id="PTHR12281:SF31">
    <property type="entry name" value="DCN1-LIKE PROTEIN 3"/>
    <property type="match status" value="1"/>
</dbReference>
<dbReference type="PANTHER" id="PTHR12281">
    <property type="entry name" value="RP42 RELATED"/>
    <property type="match status" value="1"/>
</dbReference>
<dbReference type="Pfam" id="PF03556">
    <property type="entry name" value="Cullin_binding"/>
    <property type="match status" value="1"/>
</dbReference>
<dbReference type="PROSITE" id="PS51229">
    <property type="entry name" value="DCUN1"/>
    <property type="match status" value="1"/>
</dbReference>
<gene>
    <name evidence="6" type="primary">AAR3</name>
    <name evidence="8" type="ordered locus">At3g28970</name>
    <name evidence="9" type="ORF">K5K13.8</name>
</gene>
<accession>Q9MBG8</accession>
<evidence type="ECO:0000250" key="1">
    <source>
        <dbReference type="UniProtKB" id="Q6PH85"/>
    </source>
</evidence>
<evidence type="ECO:0000255" key="2">
    <source>
        <dbReference type="PROSITE-ProRule" id="PRU00574"/>
    </source>
</evidence>
<evidence type="ECO:0000255" key="3">
    <source>
        <dbReference type="PROSITE-ProRule" id="PRU00768"/>
    </source>
</evidence>
<evidence type="ECO:0000256" key="4">
    <source>
        <dbReference type="SAM" id="MobiDB-lite"/>
    </source>
</evidence>
<evidence type="ECO:0000269" key="5">
    <source>
    </source>
</evidence>
<evidence type="ECO:0000303" key="6">
    <source>
    </source>
</evidence>
<evidence type="ECO:0000305" key="7"/>
<evidence type="ECO:0000312" key="8">
    <source>
        <dbReference type="Araport" id="AT3G28970"/>
    </source>
</evidence>
<evidence type="ECO:0000312" key="9">
    <source>
        <dbReference type="EMBL" id="AAO64110.1"/>
    </source>
</evidence>
<reference key="1">
    <citation type="journal article" date="2000" name="DNA Res.">
        <title>Structural analysis of Arabidopsis thaliana chromosome 3. I. Sequence features of the regions of 4,504,864 bp covered by sixty P1 and TAC clones.</title>
        <authorList>
            <person name="Sato S."/>
            <person name="Nakamura Y."/>
            <person name="Kaneko T."/>
            <person name="Katoh T."/>
            <person name="Asamizu E."/>
            <person name="Tabata S."/>
        </authorList>
    </citation>
    <scope>NUCLEOTIDE SEQUENCE [LARGE SCALE GENOMIC DNA]</scope>
    <source>
        <strain>cv. Columbia</strain>
    </source>
</reference>
<reference key="2">
    <citation type="journal article" date="2017" name="Plant J.">
        <title>Araport11: a complete reannotation of the Arabidopsis thaliana reference genome.</title>
        <authorList>
            <person name="Cheng C.Y."/>
            <person name="Krishnakumar V."/>
            <person name="Chan A.P."/>
            <person name="Thibaud-Nissen F."/>
            <person name="Schobel S."/>
            <person name="Town C.D."/>
        </authorList>
    </citation>
    <scope>GENOME REANNOTATION</scope>
    <source>
        <strain>cv. Columbia</strain>
    </source>
</reference>
<reference key="3">
    <citation type="journal article" date="2002" name="Science">
        <title>Functional annotation of a full-length Arabidopsis cDNA collection.</title>
        <authorList>
            <person name="Seki M."/>
            <person name="Narusaka M."/>
            <person name="Kamiya A."/>
            <person name="Ishida J."/>
            <person name="Satou M."/>
            <person name="Sakurai T."/>
            <person name="Nakajima M."/>
            <person name="Enju A."/>
            <person name="Akiyama K."/>
            <person name="Oono Y."/>
            <person name="Muramatsu M."/>
            <person name="Hayashizaki Y."/>
            <person name="Kawai J."/>
            <person name="Carninci P."/>
            <person name="Itoh M."/>
            <person name="Ishii Y."/>
            <person name="Arakawa T."/>
            <person name="Shibata K."/>
            <person name="Shinagawa A."/>
            <person name="Shinozaki K."/>
        </authorList>
    </citation>
    <scope>NUCLEOTIDE SEQUENCE [LARGE SCALE MRNA]</scope>
    <source>
        <strain>cv. Columbia</strain>
    </source>
</reference>
<reference key="4">
    <citation type="journal article" date="2003" name="Science">
        <title>Empirical analysis of transcriptional activity in the Arabidopsis genome.</title>
        <authorList>
            <person name="Yamada K."/>
            <person name="Lim J."/>
            <person name="Dale J.M."/>
            <person name="Chen H."/>
            <person name="Shinn P."/>
            <person name="Palm C.J."/>
            <person name="Southwick A.M."/>
            <person name="Wu H.C."/>
            <person name="Kim C.J."/>
            <person name="Nguyen M."/>
            <person name="Pham P.K."/>
            <person name="Cheuk R.F."/>
            <person name="Karlin-Newmann G."/>
            <person name="Liu S.X."/>
            <person name="Lam B."/>
            <person name="Sakano H."/>
            <person name="Wu T."/>
            <person name="Yu G."/>
            <person name="Miranda M."/>
            <person name="Quach H.L."/>
            <person name="Tripp M."/>
            <person name="Chang C.H."/>
            <person name="Lee J.M."/>
            <person name="Toriumi M.J."/>
            <person name="Chan M.M."/>
            <person name="Tang C.C."/>
            <person name="Onodera C.S."/>
            <person name="Deng J.M."/>
            <person name="Akiyama K."/>
            <person name="Ansari Y."/>
            <person name="Arakawa T."/>
            <person name="Banh J."/>
            <person name="Banno F."/>
            <person name="Bowser L."/>
            <person name="Brooks S.Y."/>
            <person name="Carninci P."/>
            <person name="Chao Q."/>
            <person name="Choy N."/>
            <person name="Enju A."/>
            <person name="Goldsmith A.D."/>
            <person name="Gurjal M."/>
            <person name="Hansen N.F."/>
            <person name="Hayashizaki Y."/>
            <person name="Johnson-Hopson C."/>
            <person name="Hsuan V.W."/>
            <person name="Iida K."/>
            <person name="Karnes M."/>
            <person name="Khan S."/>
            <person name="Koesema E."/>
            <person name="Ishida J."/>
            <person name="Jiang P.X."/>
            <person name="Jones T."/>
            <person name="Kawai J."/>
            <person name="Kamiya A."/>
            <person name="Meyers C."/>
            <person name="Nakajima M."/>
            <person name="Narusaka M."/>
            <person name="Seki M."/>
            <person name="Sakurai T."/>
            <person name="Satou M."/>
            <person name="Tamse R."/>
            <person name="Vaysberg M."/>
            <person name="Wallender E.K."/>
            <person name="Wong C."/>
            <person name="Yamamura Y."/>
            <person name="Yuan S."/>
            <person name="Shinozaki K."/>
            <person name="Davis R.W."/>
            <person name="Theologis A."/>
            <person name="Ecker J.R."/>
        </authorList>
    </citation>
    <scope>NUCLEOTIDE SEQUENCE [LARGE SCALE MRNA]</scope>
    <source>
        <strain>cv. Columbia</strain>
    </source>
</reference>
<reference key="5">
    <citation type="journal article" date="2007" name="Plant Physiol.">
        <title>Genetic characterization of mutants resistant to the antiauxin p-chlorophenoxyisobutyric acid reveals that AAR3, a gene encoding a DCN1-like protein, regulates responses to the synthetic auxin 2,4-dichlorophenoxyacetic acid in Arabidopsis roots.</title>
        <authorList>
            <person name="Biswas K.K."/>
            <person name="Ooura C."/>
            <person name="Higuchi K."/>
            <person name="Miyazaki Y."/>
            <person name="Van Nguyen V."/>
            <person name="Rahman A."/>
            <person name="Uchimiya H."/>
            <person name="Kiyosue T."/>
            <person name="Koshiba T."/>
            <person name="Tanaka A."/>
            <person name="Narumi I."/>
            <person name="Oono Y."/>
        </authorList>
    </citation>
    <scope>FUNCTION</scope>
    <scope>DISRUPTION PHENOTYPE</scope>
    <scope>SUBCELLULAR LOCATION</scope>
    <source>
        <strain>cv. Columbia</strain>
    </source>
</reference>
<comment type="function">
    <text evidence="1 5">May contribute to the neddylation of all cullins by transferring NEDD8 from N-terminally acetylated NEDD8-conjugating E2s enzyme to different cullin C-terminal domain-RBX complexes; neddylation of cullins play an essential role in the regulation of SCF-type complexes activity (By similarity). Regulates responses to the synthetic auxin 2,4-dichlorophenoxyacetic acid (2,4-D) in roots, probably by modulating the SCF(TIR1) ubiquitin E3 ligase complex-mediated proteolysis (PubMed:17905859).</text>
</comment>
<comment type="subcellular location">
    <subcellularLocation>
        <location evidence="3 5">Nucleus</location>
    </subcellularLocation>
</comment>
<comment type="domain">
    <text evidence="1">The DCUN1 domain, also known as PONY domain, mediates the interaction with different cullins.</text>
</comment>
<comment type="disruption phenotype">
    <text evidence="5">Root growth resistance to the anti-auxin p-chlorophenoxyisobutyric acid (PCIB), which inhibits auxin action by interfering the upstream auxin-signaling events (PubMed:17905859). Also resistant to the auxin analog 2,4-dichlorophenoxyacetic acid (2,4-D) herbicide (PubMed:17905859).</text>
</comment>
<organism>
    <name type="scientific">Arabidopsis thaliana</name>
    <name type="common">Mouse-ear cress</name>
    <dbReference type="NCBI Taxonomy" id="3702"/>
    <lineage>
        <taxon>Eukaryota</taxon>
        <taxon>Viridiplantae</taxon>
        <taxon>Streptophyta</taxon>
        <taxon>Embryophyta</taxon>
        <taxon>Tracheophyta</taxon>
        <taxon>Spermatophyta</taxon>
        <taxon>Magnoliopsida</taxon>
        <taxon>eudicotyledons</taxon>
        <taxon>Gunneridae</taxon>
        <taxon>Pentapetalae</taxon>
        <taxon>rosids</taxon>
        <taxon>malvids</taxon>
        <taxon>Brassicales</taxon>
        <taxon>Brassicaceae</taxon>
        <taxon>Camelineae</taxon>
        <taxon>Arabidopsis</taxon>
    </lineage>
</organism>